<comment type="similarity">
    <text evidence="2">Belongs to the eukaryotic ribosomal protein eL31 family.</text>
</comment>
<gene>
    <name type="primary">RPL31B</name>
    <name type="ordered locus">At4g26230</name>
    <name type="ORF">T25K17.40</name>
</gene>
<keyword id="KW-1185">Reference proteome</keyword>
<keyword id="KW-0687">Ribonucleoprotein</keyword>
<keyword id="KW-0689">Ribosomal protein</keyword>
<feature type="chain" id="PRO_0000153776" description="Large ribosomal subunit protein eL31y">
    <location>
        <begin position="1"/>
        <end position="119"/>
    </location>
</feature>
<sequence>MSEKKGRKEEVVTREYTINLHRRLHSCTFKKKAPKAIKEIRKFAEKEMGTKDVRVDVKLNKQIWSKGIRGPPRRIRVRVARKRNDDEDAKEEFFSLVTVAEIPAEGLSGLGTKIIEEED</sequence>
<name>RL312_ARATH</name>
<evidence type="ECO:0000303" key="1">
    <source>
    </source>
</evidence>
<evidence type="ECO:0000305" key="2"/>
<organism>
    <name type="scientific">Arabidopsis thaliana</name>
    <name type="common">Mouse-ear cress</name>
    <dbReference type="NCBI Taxonomy" id="3702"/>
    <lineage>
        <taxon>Eukaryota</taxon>
        <taxon>Viridiplantae</taxon>
        <taxon>Streptophyta</taxon>
        <taxon>Embryophyta</taxon>
        <taxon>Tracheophyta</taxon>
        <taxon>Spermatophyta</taxon>
        <taxon>Magnoliopsida</taxon>
        <taxon>eudicotyledons</taxon>
        <taxon>Gunneridae</taxon>
        <taxon>Pentapetalae</taxon>
        <taxon>rosids</taxon>
        <taxon>malvids</taxon>
        <taxon>Brassicales</taxon>
        <taxon>Brassicaceae</taxon>
        <taxon>Camelineae</taxon>
        <taxon>Arabidopsis</taxon>
    </lineage>
</organism>
<proteinExistence type="inferred from homology"/>
<dbReference type="EMBL" id="AL049171">
    <property type="protein sequence ID" value="CAB38952.1"/>
    <property type="molecule type" value="Genomic_DNA"/>
</dbReference>
<dbReference type="EMBL" id="AL161564">
    <property type="protein sequence ID" value="CAB79478.1"/>
    <property type="molecule type" value="Genomic_DNA"/>
</dbReference>
<dbReference type="EMBL" id="CP002687">
    <property type="protein sequence ID" value="AEE85173.1"/>
    <property type="molecule type" value="Genomic_DNA"/>
</dbReference>
<dbReference type="EMBL" id="BT005841">
    <property type="protein sequence ID" value="AAO64776.1"/>
    <property type="molecule type" value="mRNA"/>
</dbReference>
<dbReference type="EMBL" id="AY085228">
    <property type="protein sequence ID" value="AAM62461.1"/>
    <property type="molecule type" value="mRNA"/>
</dbReference>
<dbReference type="PIR" id="T06007">
    <property type="entry name" value="T06007"/>
</dbReference>
<dbReference type="RefSeq" id="NP_194353.1">
    <property type="nucleotide sequence ID" value="NM_118756.5"/>
</dbReference>
<dbReference type="SMR" id="Q9STR1"/>
<dbReference type="BioGRID" id="14016">
    <property type="interactions" value="89"/>
</dbReference>
<dbReference type="FunCoup" id="Q9STR1">
    <property type="interactions" value="3031"/>
</dbReference>
<dbReference type="IntAct" id="Q9STR1">
    <property type="interactions" value="6"/>
</dbReference>
<dbReference type="STRING" id="3702.Q9STR1"/>
<dbReference type="PaxDb" id="3702-AT4G26230.1"/>
<dbReference type="ProteomicsDB" id="224815"/>
<dbReference type="EnsemblPlants" id="AT4G26230.1">
    <property type="protein sequence ID" value="AT4G26230.1"/>
    <property type="gene ID" value="AT4G26230"/>
</dbReference>
<dbReference type="GeneID" id="828729"/>
<dbReference type="Gramene" id="AT4G26230.1">
    <property type="protein sequence ID" value="AT4G26230.1"/>
    <property type="gene ID" value="AT4G26230"/>
</dbReference>
<dbReference type="KEGG" id="ath:AT4G26230"/>
<dbReference type="Araport" id="AT4G26230"/>
<dbReference type="TAIR" id="AT4G26230"/>
<dbReference type="eggNOG" id="KOG0893">
    <property type="taxonomic scope" value="Eukaryota"/>
</dbReference>
<dbReference type="HOGENOM" id="CLU_112570_1_2_1"/>
<dbReference type="InParanoid" id="Q9STR1"/>
<dbReference type="OMA" id="EVWKQGI"/>
<dbReference type="OrthoDB" id="1093376at2759"/>
<dbReference type="PhylomeDB" id="Q9STR1"/>
<dbReference type="PRO" id="PR:Q9STR1"/>
<dbReference type="Proteomes" id="UP000006548">
    <property type="component" value="Chromosome 4"/>
</dbReference>
<dbReference type="ExpressionAtlas" id="Q9STR1">
    <property type="expression patterns" value="baseline and differential"/>
</dbReference>
<dbReference type="GO" id="GO:0022625">
    <property type="term" value="C:cytosolic large ribosomal subunit"/>
    <property type="evidence" value="ECO:0007005"/>
    <property type="project" value="TAIR"/>
</dbReference>
<dbReference type="GO" id="GO:0003729">
    <property type="term" value="F:mRNA binding"/>
    <property type="evidence" value="ECO:0000314"/>
    <property type="project" value="TAIR"/>
</dbReference>
<dbReference type="GO" id="GO:0003735">
    <property type="term" value="F:structural constituent of ribosome"/>
    <property type="evidence" value="ECO:0000314"/>
    <property type="project" value="CAFA"/>
</dbReference>
<dbReference type="GO" id="GO:0006412">
    <property type="term" value="P:translation"/>
    <property type="evidence" value="ECO:0007669"/>
    <property type="project" value="InterPro"/>
</dbReference>
<dbReference type="CDD" id="cd00463">
    <property type="entry name" value="Ribosomal_L31e"/>
    <property type="match status" value="1"/>
</dbReference>
<dbReference type="FunFam" id="3.10.440.10:FF:000001">
    <property type="entry name" value="60S ribosomal protein L31"/>
    <property type="match status" value="1"/>
</dbReference>
<dbReference type="Gene3D" id="3.10.440.10">
    <property type="match status" value="1"/>
</dbReference>
<dbReference type="InterPro" id="IPR000054">
    <property type="entry name" value="Ribosomal_eL31"/>
</dbReference>
<dbReference type="InterPro" id="IPR020052">
    <property type="entry name" value="Ribosomal_eL31_CS"/>
</dbReference>
<dbReference type="InterPro" id="IPR023621">
    <property type="entry name" value="Ribosomal_eL31_dom_sf"/>
</dbReference>
<dbReference type="NCBIfam" id="NF002258">
    <property type="entry name" value="PRK01192.1-1"/>
    <property type="match status" value="1"/>
</dbReference>
<dbReference type="PANTHER" id="PTHR10956">
    <property type="entry name" value="60S RIBOSOMAL PROTEIN L31"/>
    <property type="match status" value="1"/>
</dbReference>
<dbReference type="PANTHER" id="PTHR10956:SF52">
    <property type="entry name" value="LARGE RIBOSOMAL SUBUNIT PROTEIN EL31X-RELATED"/>
    <property type="match status" value="1"/>
</dbReference>
<dbReference type="Pfam" id="PF01198">
    <property type="entry name" value="Ribosomal_L31e"/>
    <property type="match status" value="1"/>
</dbReference>
<dbReference type="SMART" id="SM01380">
    <property type="entry name" value="Ribosomal_L31e"/>
    <property type="match status" value="1"/>
</dbReference>
<dbReference type="SUPFAM" id="SSF54575">
    <property type="entry name" value="Ribosomal protein L31e"/>
    <property type="match status" value="1"/>
</dbReference>
<dbReference type="PROSITE" id="PS01144">
    <property type="entry name" value="RIBOSOMAL_L31E"/>
    <property type="match status" value="1"/>
</dbReference>
<reference key="1">
    <citation type="journal article" date="1999" name="Nature">
        <title>Sequence and analysis of chromosome 4 of the plant Arabidopsis thaliana.</title>
        <authorList>
            <person name="Mayer K.F.X."/>
            <person name="Schueller C."/>
            <person name="Wambutt R."/>
            <person name="Murphy G."/>
            <person name="Volckaert G."/>
            <person name="Pohl T."/>
            <person name="Duesterhoeft A."/>
            <person name="Stiekema W."/>
            <person name="Entian K.-D."/>
            <person name="Terryn N."/>
            <person name="Harris B."/>
            <person name="Ansorge W."/>
            <person name="Brandt P."/>
            <person name="Grivell L.A."/>
            <person name="Rieger M."/>
            <person name="Weichselgartner M."/>
            <person name="de Simone V."/>
            <person name="Obermaier B."/>
            <person name="Mache R."/>
            <person name="Mueller M."/>
            <person name="Kreis M."/>
            <person name="Delseny M."/>
            <person name="Puigdomenech P."/>
            <person name="Watson M."/>
            <person name="Schmidtheini T."/>
            <person name="Reichert B."/>
            <person name="Portetelle D."/>
            <person name="Perez-Alonso M."/>
            <person name="Boutry M."/>
            <person name="Bancroft I."/>
            <person name="Vos P."/>
            <person name="Hoheisel J."/>
            <person name="Zimmermann W."/>
            <person name="Wedler H."/>
            <person name="Ridley P."/>
            <person name="Langham S.-A."/>
            <person name="McCullagh B."/>
            <person name="Bilham L."/>
            <person name="Robben J."/>
            <person name="van der Schueren J."/>
            <person name="Grymonprez B."/>
            <person name="Chuang Y.-J."/>
            <person name="Vandenbussche F."/>
            <person name="Braeken M."/>
            <person name="Weltjens I."/>
            <person name="Voet M."/>
            <person name="Bastiaens I."/>
            <person name="Aert R."/>
            <person name="Defoor E."/>
            <person name="Weitzenegger T."/>
            <person name="Bothe G."/>
            <person name="Ramsperger U."/>
            <person name="Hilbert H."/>
            <person name="Braun M."/>
            <person name="Holzer E."/>
            <person name="Brandt A."/>
            <person name="Peters S."/>
            <person name="van Staveren M."/>
            <person name="Dirkse W."/>
            <person name="Mooijman P."/>
            <person name="Klein Lankhorst R."/>
            <person name="Rose M."/>
            <person name="Hauf J."/>
            <person name="Koetter P."/>
            <person name="Berneiser S."/>
            <person name="Hempel S."/>
            <person name="Feldpausch M."/>
            <person name="Lamberth S."/>
            <person name="Van den Daele H."/>
            <person name="De Keyser A."/>
            <person name="Buysshaert C."/>
            <person name="Gielen J."/>
            <person name="Villarroel R."/>
            <person name="De Clercq R."/>
            <person name="van Montagu M."/>
            <person name="Rogers J."/>
            <person name="Cronin A."/>
            <person name="Quail M.A."/>
            <person name="Bray-Allen S."/>
            <person name="Clark L."/>
            <person name="Doggett J."/>
            <person name="Hall S."/>
            <person name="Kay M."/>
            <person name="Lennard N."/>
            <person name="McLay K."/>
            <person name="Mayes R."/>
            <person name="Pettett A."/>
            <person name="Rajandream M.A."/>
            <person name="Lyne M."/>
            <person name="Benes V."/>
            <person name="Rechmann S."/>
            <person name="Borkova D."/>
            <person name="Bloecker H."/>
            <person name="Scharfe M."/>
            <person name="Grimm M."/>
            <person name="Loehnert T.-H."/>
            <person name="Dose S."/>
            <person name="de Haan M."/>
            <person name="Maarse A.C."/>
            <person name="Schaefer M."/>
            <person name="Mueller-Auer S."/>
            <person name="Gabel C."/>
            <person name="Fuchs M."/>
            <person name="Fartmann B."/>
            <person name="Granderath K."/>
            <person name="Dauner D."/>
            <person name="Herzl A."/>
            <person name="Neumann S."/>
            <person name="Argiriou A."/>
            <person name="Vitale D."/>
            <person name="Liguori R."/>
            <person name="Piravandi E."/>
            <person name="Massenet O."/>
            <person name="Quigley F."/>
            <person name="Clabauld G."/>
            <person name="Muendlein A."/>
            <person name="Felber R."/>
            <person name="Schnabl S."/>
            <person name="Hiller R."/>
            <person name="Schmidt W."/>
            <person name="Lecharny A."/>
            <person name="Aubourg S."/>
            <person name="Chefdor F."/>
            <person name="Cooke R."/>
            <person name="Berger C."/>
            <person name="Monfort A."/>
            <person name="Casacuberta E."/>
            <person name="Gibbons T."/>
            <person name="Weber N."/>
            <person name="Vandenbol M."/>
            <person name="Bargues M."/>
            <person name="Terol J."/>
            <person name="Torres A."/>
            <person name="Perez-Perez A."/>
            <person name="Purnelle B."/>
            <person name="Bent E."/>
            <person name="Johnson S."/>
            <person name="Tacon D."/>
            <person name="Jesse T."/>
            <person name="Heijnen L."/>
            <person name="Schwarz S."/>
            <person name="Scholler P."/>
            <person name="Heber S."/>
            <person name="Francs P."/>
            <person name="Bielke C."/>
            <person name="Frishman D."/>
            <person name="Haase D."/>
            <person name="Lemcke K."/>
            <person name="Mewes H.-W."/>
            <person name="Stocker S."/>
            <person name="Zaccaria P."/>
            <person name="Bevan M."/>
            <person name="Wilson R.K."/>
            <person name="de la Bastide M."/>
            <person name="Habermann K."/>
            <person name="Parnell L."/>
            <person name="Dedhia N."/>
            <person name="Gnoj L."/>
            <person name="Schutz K."/>
            <person name="Huang E."/>
            <person name="Spiegel L."/>
            <person name="Sekhon M."/>
            <person name="Murray J."/>
            <person name="Sheet P."/>
            <person name="Cordes M."/>
            <person name="Abu-Threideh J."/>
            <person name="Stoneking T."/>
            <person name="Kalicki J."/>
            <person name="Graves T."/>
            <person name="Harmon G."/>
            <person name="Edwards J."/>
            <person name="Latreille P."/>
            <person name="Courtney L."/>
            <person name="Cloud J."/>
            <person name="Abbott A."/>
            <person name="Scott K."/>
            <person name="Johnson D."/>
            <person name="Minx P."/>
            <person name="Bentley D."/>
            <person name="Fulton B."/>
            <person name="Miller N."/>
            <person name="Greco T."/>
            <person name="Kemp K."/>
            <person name="Kramer J."/>
            <person name="Fulton L."/>
            <person name="Mardis E."/>
            <person name="Dante M."/>
            <person name="Pepin K."/>
            <person name="Hillier L.W."/>
            <person name="Nelson J."/>
            <person name="Spieth J."/>
            <person name="Ryan E."/>
            <person name="Andrews S."/>
            <person name="Geisel C."/>
            <person name="Layman D."/>
            <person name="Du H."/>
            <person name="Ali J."/>
            <person name="Berghoff A."/>
            <person name="Jones K."/>
            <person name="Drone K."/>
            <person name="Cotton M."/>
            <person name="Joshu C."/>
            <person name="Antonoiu B."/>
            <person name="Zidanic M."/>
            <person name="Strong C."/>
            <person name="Sun H."/>
            <person name="Lamar B."/>
            <person name="Yordan C."/>
            <person name="Ma P."/>
            <person name="Zhong J."/>
            <person name="Preston R."/>
            <person name="Vil D."/>
            <person name="Shekher M."/>
            <person name="Matero A."/>
            <person name="Shah R."/>
            <person name="Swaby I.K."/>
            <person name="O'Shaughnessy A."/>
            <person name="Rodriguez M."/>
            <person name="Hoffman J."/>
            <person name="Till S."/>
            <person name="Granat S."/>
            <person name="Shohdy N."/>
            <person name="Hasegawa A."/>
            <person name="Hameed A."/>
            <person name="Lodhi M."/>
            <person name="Johnson A."/>
            <person name="Chen E."/>
            <person name="Marra M.A."/>
            <person name="Martienssen R."/>
            <person name="McCombie W.R."/>
        </authorList>
    </citation>
    <scope>NUCLEOTIDE SEQUENCE [LARGE SCALE GENOMIC DNA]</scope>
    <source>
        <strain>cv. Columbia</strain>
    </source>
</reference>
<reference key="2">
    <citation type="journal article" date="2017" name="Plant J.">
        <title>Araport11: a complete reannotation of the Arabidopsis thaliana reference genome.</title>
        <authorList>
            <person name="Cheng C.Y."/>
            <person name="Krishnakumar V."/>
            <person name="Chan A.P."/>
            <person name="Thibaud-Nissen F."/>
            <person name="Schobel S."/>
            <person name="Town C.D."/>
        </authorList>
    </citation>
    <scope>GENOME REANNOTATION</scope>
    <source>
        <strain>cv. Columbia</strain>
    </source>
</reference>
<reference key="3">
    <citation type="journal article" date="2003" name="Science">
        <title>Empirical analysis of transcriptional activity in the Arabidopsis genome.</title>
        <authorList>
            <person name="Yamada K."/>
            <person name="Lim J."/>
            <person name="Dale J.M."/>
            <person name="Chen H."/>
            <person name="Shinn P."/>
            <person name="Palm C.J."/>
            <person name="Southwick A.M."/>
            <person name="Wu H.C."/>
            <person name="Kim C.J."/>
            <person name="Nguyen M."/>
            <person name="Pham P.K."/>
            <person name="Cheuk R.F."/>
            <person name="Karlin-Newmann G."/>
            <person name="Liu S.X."/>
            <person name="Lam B."/>
            <person name="Sakano H."/>
            <person name="Wu T."/>
            <person name="Yu G."/>
            <person name="Miranda M."/>
            <person name="Quach H.L."/>
            <person name="Tripp M."/>
            <person name="Chang C.H."/>
            <person name="Lee J.M."/>
            <person name="Toriumi M.J."/>
            <person name="Chan M.M."/>
            <person name="Tang C.C."/>
            <person name="Onodera C.S."/>
            <person name="Deng J.M."/>
            <person name="Akiyama K."/>
            <person name="Ansari Y."/>
            <person name="Arakawa T."/>
            <person name="Banh J."/>
            <person name="Banno F."/>
            <person name="Bowser L."/>
            <person name="Brooks S.Y."/>
            <person name="Carninci P."/>
            <person name="Chao Q."/>
            <person name="Choy N."/>
            <person name="Enju A."/>
            <person name="Goldsmith A.D."/>
            <person name="Gurjal M."/>
            <person name="Hansen N.F."/>
            <person name="Hayashizaki Y."/>
            <person name="Johnson-Hopson C."/>
            <person name="Hsuan V.W."/>
            <person name="Iida K."/>
            <person name="Karnes M."/>
            <person name="Khan S."/>
            <person name="Koesema E."/>
            <person name="Ishida J."/>
            <person name="Jiang P.X."/>
            <person name="Jones T."/>
            <person name="Kawai J."/>
            <person name="Kamiya A."/>
            <person name="Meyers C."/>
            <person name="Nakajima M."/>
            <person name="Narusaka M."/>
            <person name="Seki M."/>
            <person name="Sakurai T."/>
            <person name="Satou M."/>
            <person name="Tamse R."/>
            <person name="Vaysberg M."/>
            <person name="Wallender E.K."/>
            <person name="Wong C."/>
            <person name="Yamamura Y."/>
            <person name="Yuan S."/>
            <person name="Shinozaki K."/>
            <person name="Davis R.W."/>
            <person name="Theologis A."/>
            <person name="Ecker J.R."/>
        </authorList>
    </citation>
    <scope>NUCLEOTIDE SEQUENCE [LARGE SCALE MRNA]</scope>
    <source>
        <strain>cv. Columbia</strain>
    </source>
</reference>
<reference key="4">
    <citation type="submission" date="2002-03" db="EMBL/GenBank/DDBJ databases">
        <title>Full-length cDNA from Arabidopsis thaliana.</title>
        <authorList>
            <person name="Brover V.V."/>
            <person name="Troukhan M.E."/>
            <person name="Alexandrov N.A."/>
            <person name="Lu Y.-P."/>
            <person name="Flavell R.B."/>
            <person name="Feldmann K.A."/>
        </authorList>
    </citation>
    <scope>NUCLEOTIDE SEQUENCE [LARGE SCALE MRNA]</scope>
</reference>
<reference key="5">
    <citation type="journal article" date="2001" name="Plant Physiol.">
        <title>The organization of cytoplasmic ribosomal protein genes in the Arabidopsis genome.</title>
        <authorList>
            <person name="Barakat A."/>
            <person name="Szick-Miranda K."/>
            <person name="Chang I.-F."/>
            <person name="Guyot R."/>
            <person name="Blanc G."/>
            <person name="Cooke R."/>
            <person name="Delseny M."/>
            <person name="Bailey-Serres J."/>
        </authorList>
    </citation>
    <scope>GENE FAMILY ORGANIZATION</scope>
    <scope>NOMENCLATURE</scope>
</reference>
<reference key="6">
    <citation type="journal article" date="2023" name="Plant Cell">
        <title>An updated nomenclature for plant ribosomal protein genes.</title>
        <authorList>
            <person name="Scarpin M.R."/>
            <person name="Busche M."/>
            <person name="Martinez R.E."/>
            <person name="Harper L.C."/>
            <person name="Reiser L."/>
            <person name="Szakonyi D."/>
            <person name="Merchante C."/>
            <person name="Lan T."/>
            <person name="Xiong W."/>
            <person name="Mo B."/>
            <person name="Tang G."/>
            <person name="Chen X."/>
            <person name="Bailey-Serres J."/>
            <person name="Browning K.S."/>
            <person name="Brunkard J.O."/>
        </authorList>
    </citation>
    <scope>NOMENCLATURE</scope>
</reference>
<protein>
    <recommendedName>
        <fullName evidence="1">Large ribosomal subunit protein eL31y</fullName>
    </recommendedName>
    <alternativeName>
        <fullName>60S ribosomal protein L31-2</fullName>
    </alternativeName>
</protein>
<accession>Q9STR1</accession>